<dbReference type="EMBL" id="AE000657">
    <property type="protein sequence ID" value="AAC06496.1"/>
    <property type="molecule type" value="Genomic_DNA"/>
</dbReference>
<dbReference type="PIR" id="E70313">
    <property type="entry name" value="E70313"/>
</dbReference>
<dbReference type="RefSeq" id="NP_213096.1">
    <property type="nucleotide sequence ID" value="NC_000918.1"/>
</dbReference>
<dbReference type="RefSeq" id="WP_010880034.1">
    <property type="nucleotide sequence ID" value="NC_000918.1"/>
</dbReference>
<dbReference type="SMR" id="O66536"/>
<dbReference type="FunCoup" id="O66536">
    <property type="interactions" value="435"/>
</dbReference>
<dbReference type="STRING" id="224324.aq_141"/>
<dbReference type="EnsemblBacteria" id="AAC06496">
    <property type="protein sequence ID" value="AAC06496"/>
    <property type="gene ID" value="aq_141"/>
</dbReference>
<dbReference type="KEGG" id="aae:aq_141"/>
<dbReference type="eggNOG" id="COG0537">
    <property type="taxonomic scope" value="Bacteria"/>
</dbReference>
<dbReference type="HOGENOM" id="CLU_056776_8_1_0"/>
<dbReference type="InParanoid" id="O66536"/>
<dbReference type="OrthoDB" id="9784774at2"/>
<dbReference type="Proteomes" id="UP000000798">
    <property type="component" value="Chromosome"/>
</dbReference>
<dbReference type="GO" id="GO:0005737">
    <property type="term" value="C:cytoplasm"/>
    <property type="evidence" value="ECO:0000318"/>
    <property type="project" value="GO_Central"/>
</dbReference>
<dbReference type="GO" id="GO:0016787">
    <property type="term" value="F:hydrolase activity"/>
    <property type="evidence" value="ECO:0000318"/>
    <property type="project" value="GO_Central"/>
</dbReference>
<dbReference type="CDD" id="cd01276">
    <property type="entry name" value="PKCI_related"/>
    <property type="match status" value="1"/>
</dbReference>
<dbReference type="Gene3D" id="3.30.428.10">
    <property type="entry name" value="HIT-like"/>
    <property type="match status" value="1"/>
</dbReference>
<dbReference type="InterPro" id="IPR019808">
    <property type="entry name" value="Histidine_triad_CS"/>
</dbReference>
<dbReference type="InterPro" id="IPR001310">
    <property type="entry name" value="Histidine_triad_HIT"/>
</dbReference>
<dbReference type="InterPro" id="IPR011146">
    <property type="entry name" value="HIT-like"/>
</dbReference>
<dbReference type="InterPro" id="IPR036265">
    <property type="entry name" value="HIT-like_sf"/>
</dbReference>
<dbReference type="PANTHER" id="PTHR23089">
    <property type="entry name" value="HISTIDINE TRIAD HIT PROTEIN"/>
    <property type="match status" value="1"/>
</dbReference>
<dbReference type="Pfam" id="PF01230">
    <property type="entry name" value="HIT"/>
    <property type="match status" value="1"/>
</dbReference>
<dbReference type="PRINTS" id="PR00332">
    <property type="entry name" value="HISTRIAD"/>
</dbReference>
<dbReference type="SUPFAM" id="SSF54197">
    <property type="entry name" value="HIT-like"/>
    <property type="match status" value="1"/>
</dbReference>
<dbReference type="PROSITE" id="PS00892">
    <property type="entry name" value="HIT_1"/>
    <property type="match status" value="1"/>
</dbReference>
<dbReference type="PROSITE" id="PS51084">
    <property type="entry name" value="HIT_2"/>
    <property type="match status" value="1"/>
</dbReference>
<proteinExistence type="predicted"/>
<gene>
    <name type="ordered locus">aq_141</name>
</gene>
<accession>O66536</accession>
<name>YHIT_AQUAE</name>
<evidence type="ECO:0000255" key="1">
    <source>
        <dbReference type="PROSITE-ProRule" id="PRU00464"/>
    </source>
</evidence>
<sequence>MQEKDCIFCKIVRGEVPAKKVYEDDKVLAFHDINPVAPVHILIIPKKHIMGIQTLEPEDECLVGHMFYVARKIAEDLGIAPDENLNKGYRLVFNVGKDAGQSVFHLHLHLIGGREMSWPPG</sequence>
<reference key="1">
    <citation type="journal article" date="1998" name="Nature">
        <title>The complete genome of the hyperthermophilic bacterium Aquifex aeolicus.</title>
        <authorList>
            <person name="Deckert G."/>
            <person name="Warren P.V."/>
            <person name="Gaasterland T."/>
            <person name="Young W.G."/>
            <person name="Lenox A.L."/>
            <person name="Graham D.E."/>
            <person name="Overbeek R."/>
            <person name="Snead M.A."/>
            <person name="Keller M."/>
            <person name="Aujay M."/>
            <person name="Huber R."/>
            <person name="Feldman R.A."/>
            <person name="Short J.M."/>
            <person name="Olsen G.J."/>
            <person name="Swanson R.V."/>
        </authorList>
    </citation>
    <scope>NUCLEOTIDE SEQUENCE [LARGE SCALE GENOMIC DNA]</scope>
    <source>
        <strain>VF5</strain>
    </source>
</reference>
<protein>
    <recommendedName>
        <fullName>Uncharacterized HIT-like protein aq_141</fullName>
    </recommendedName>
</protein>
<keyword id="KW-1185">Reference proteome</keyword>
<feature type="chain" id="PRO_0000109809" description="Uncharacterized HIT-like protein aq_141">
    <location>
        <begin position="1"/>
        <end position="121"/>
    </location>
</feature>
<feature type="domain" description="HIT" evidence="1">
    <location>
        <begin position="7"/>
        <end position="121"/>
    </location>
</feature>
<feature type="short sequence motif" description="Histidine triad motif">
    <location>
        <begin position="105"/>
        <end position="109"/>
    </location>
</feature>
<organism>
    <name type="scientific">Aquifex aeolicus (strain VF5)</name>
    <dbReference type="NCBI Taxonomy" id="224324"/>
    <lineage>
        <taxon>Bacteria</taxon>
        <taxon>Pseudomonadati</taxon>
        <taxon>Aquificota</taxon>
        <taxon>Aquificia</taxon>
        <taxon>Aquificales</taxon>
        <taxon>Aquificaceae</taxon>
        <taxon>Aquifex</taxon>
    </lineage>
</organism>